<evidence type="ECO:0000250" key="1"/>
<evidence type="ECO:0000255" key="2">
    <source>
        <dbReference type="HAMAP-Rule" id="MF_00118"/>
    </source>
</evidence>
<sequence>MSKEKFERVKPHVNVGTIGHVDHGKTTLTAAICTTLAKVYGGAARDFASIDNAPEERERGITISTSHVEYDTPARHYAHVDCPGHADYVKNMITGAAQMDGGILVVAATDGPMPQTREHILLGRQVGIPYIIVFMNKCDMVDDEELLELVEMEVRELLSEYDFPGDDLPVIQGSALGALNGEEQWEAKIIELAEALDTYIPEPERAIDLPFLMPIEDVFSIQGRGTVVTGRIERGILKVGDEVAIVGIKDTTTTTCTGVEMFRKLLDEGRAGENVGALLRGTKRDEVERGQVLAKPGSITPHTKFESEVYVLSKDEGGRHTPFFKGYRPQFYFRTTDVTGDISLPEGVEMVMPGDNIQMVVELISPIAMDEGLRFAIREGGRTVGAGVVAKIFE</sequence>
<proteinExistence type="inferred from homology"/>
<keyword id="KW-0963">Cytoplasm</keyword>
<keyword id="KW-0251">Elongation factor</keyword>
<keyword id="KW-0342">GTP-binding</keyword>
<keyword id="KW-0378">Hydrolase</keyword>
<keyword id="KW-0460">Magnesium</keyword>
<keyword id="KW-0479">Metal-binding</keyword>
<keyword id="KW-0547">Nucleotide-binding</keyword>
<keyword id="KW-0648">Protein biosynthesis</keyword>
<organism>
    <name type="scientific">Vibrio vulnificus (strain CMCP6)</name>
    <dbReference type="NCBI Taxonomy" id="216895"/>
    <lineage>
        <taxon>Bacteria</taxon>
        <taxon>Pseudomonadati</taxon>
        <taxon>Pseudomonadota</taxon>
        <taxon>Gammaproteobacteria</taxon>
        <taxon>Vibrionales</taxon>
        <taxon>Vibrionaceae</taxon>
        <taxon>Vibrio</taxon>
    </lineage>
</organism>
<feature type="chain" id="PRO_0000337569" description="Elongation factor Tu 1">
    <location>
        <begin position="1"/>
        <end position="394"/>
    </location>
</feature>
<feature type="domain" description="tr-type G">
    <location>
        <begin position="10"/>
        <end position="204"/>
    </location>
</feature>
<feature type="region of interest" description="G1" evidence="1">
    <location>
        <begin position="19"/>
        <end position="26"/>
    </location>
</feature>
<feature type="region of interest" description="G2" evidence="1">
    <location>
        <begin position="60"/>
        <end position="64"/>
    </location>
</feature>
<feature type="region of interest" description="G3" evidence="1">
    <location>
        <begin position="81"/>
        <end position="84"/>
    </location>
</feature>
<feature type="region of interest" description="G4" evidence="1">
    <location>
        <begin position="136"/>
        <end position="139"/>
    </location>
</feature>
<feature type="region of interest" description="G5" evidence="1">
    <location>
        <begin position="174"/>
        <end position="176"/>
    </location>
</feature>
<feature type="binding site" evidence="2">
    <location>
        <begin position="19"/>
        <end position="26"/>
    </location>
    <ligand>
        <name>GTP</name>
        <dbReference type="ChEBI" id="CHEBI:37565"/>
    </ligand>
</feature>
<feature type="binding site" evidence="2">
    <location>
        <position position="26"/>
    </location>
    <ligand>
        <name>Mg(2+)</name>
        <dbReference type="ChEBI" id="CHEBI:18420"/>
    </ligand>
</feature>
<feature type="binding site" evidence="2">
    <location>
        <begin position="81"/>
        <end position="85"/>
    </location>
    <ligand>
        <name>GTP</name>
        <dbReference type="ChEBI" id="CHEBI:37565"/>
    </ligand>
</feature>
<feature type="binding site" evidence="2">
    <location>
        <begin position="136"/>
        <end position="139"/>
    </location>
    <ligand>
        <name>GTP</name>
        <dbReference type="ChEBI" id="CHEBI:37565"/>
    </ligand>
</feature>
<reference key="1">
    <citation type="submission" date="2002-12" db="EMBL/GenBank/DDBJ databases">
        <title>Complete genome sequence of Vibrio vulnificus CMCP6.</title>
        <authorList>
            <person name="Rhee J.H."/>
            <person name="Kim S.Y."/>
            <person name="Chung S.S."/>
            <person name="Kim J.J."/>
            <person name="Moon Y.H."/>
            <person name="Jeong H."/>
            <person name="Choy H.E."/>
        </authorList>
    </citation>
    <scope>NUCLEOTIDE SEQUENCE [LARGE SCALE GENOMIC DNA]</scope>
    <source>
        <strain>CMCP6</strain>
    </source>
</reference>
<reference key="2">
    <citation type="journal article" date="2011" name="Mol. Syst. Biol.">
        <title>Integrative genome-scale metabolic analysis of Vibrio vulnificus for drug targeting and discovery.</title>
        <authorList>
            <person name="Kim H.U."/>
            <person name="Kim S.Y."/>
            <person name="Jeong H."/>
            <person name="Kim T.Y."/>
            <person name="Kim J.J."/>
            <person name="Choy H.E."/>
            <person name="Yi K.Y."/>
            <person name="Rhee J.H."/>
            <person name="Lee S.Y."/>
        </authorList>
    </citation>
    <scope>SEQUENCE REVISION</scope>
    <source>
        <strain>CMCP6</strain>
    </source>
</reference>
<gene>
    <name evidence="2" type="primary">tuf1</name>
    <name type="ordered locus">VV1_1203</name>
    <name type="ORF">VV1_1204</name>
</gene>
<comment type="function">
    <text evidence="2">GTP hydrolase that promotes the GTP-dependent binding of aminoacyl-tRNA to the A-site of ribosomes during protein biosynthesis.</text>
</comment>
<comment type="catalytic activity">
    <reaction evidence="2">
        <text>GTP + H2O = GDP + phosphate + H(+)</text>
        <dbReference type="Rhea" id="RHEA:19669"/>
        <dbReference type="ChEBI" id="CHEBI:15377"/>
        <dbReference type="ChEBI" id="CHEBI:15378"/>
        <dbReference type="ChEBI" id="CHEBI:37565"/>
        <dbReference type="ChEBI" id="CHEBI:43474"/>
        <dbReference type="ChEBI" id="CHEBI:58189"/>
        <dbReference type="EC" id="3.6.5.3"/>
    </reaction>
    <physiologicalReaction direction="left-to-right" evidence="2">
        <dbReference type="Rhea" id="RHEA:19670"/>
    </physiologicalReaction>
</comment>
<comment type="subunit">
    <text evidence="2">Monomer.</text>
</comment>
<comment type="subcellular location">
    <subcellularLocation>
        <location evidence="2">Cytoplasm</location>
    </subcellularLocation>
</comment>
<comment type="similarity">
    <text evidence="2">Belongs to the TRAFAC class translation factor GTPase superfamily. Classic translation factor GTPase family. EF-Tu/EF-1A subfamily.</text>
</comment>
<dbReference type="EC" id="3.6.5.3" evidence="2"/>
<dbReference type="EMBL" id="AE016795">
    <property type="protein sequence ID" value="AAO09663.2"/>
    <property type="molecule type" value="Genomic_DNA"/>
</dbReference>
<dbReference type="SMR" id="Q8DD27"/>
<dbReference type="KEGG" id="vvu:VV1_1203"/>
<dbReference type="HOGENOM" id="CLU_007265_0_0_6"/>
<dbReference type="Proteomes" id="UP000002275">
    <property type="component" value="Chromosome 1"/>
</dbReference>
<dbReference type="GO" id="GO:0005829">
    <property type="term" value="C:cytosol"/>
    <property type="evidence" value="ECO:0007669"/>
    <property type="project" value="TreeGrafter"/>
</dbReference>
<dbReference type="GO" id="GO:0005525">
    <property type="term" value="F:GTP binding"/>
    <property type="evidence" value="ECO:0007669"/>
    <property type="project" value="UniProtKB-UniRule"/>
</dbReference>
<dbReference type="GO" id="GO:0003924">
    <property type="term" value="F:GTPase activity"/>
    <property type="evidence" value="ECO:0007669"/>
    <property type="project" value="InterPro"/>
</dbReference>
<dbReference type="GO" id="GO:0097216">
    <property type="term" value="F:guanosine tetraphosphate binding"/>
    <property type="evidence" value="ECO:0007669"/>
    <property type="project" value="UniProtKB-ARBA"/>
</dbReference>
<dbReference type="GO" id="GO:0003746">
    <property type="term" value="F:translation elongation factor activity"/>
    <property type="evidence" value="ECO:0007669"/>
    <property type="project" value="UniProtKB-UniRule"/>
</dbReference>
<dbReference type="CDD" id="cd01884">
    <property type="entry name" value="EF_Tu"/>
    <property type="match status" value="1"/>
</dbReference>
<dbReference type="CDD" id="cd03697">
    <property type="entry name" value="EFTU_II"/>
    <property type="match status" value="1"/>
</dbReference>
<dbReference type="CDD" id="cd03707">
    <property type="entry name" value="EFTU_III"/>
    <property type="match status" value="1"/>
</dbReference>
<dbReference type="FunFam" id="2.40.30.10:FF:000001">
    <property type="entry name" value="Elongation factor Tu"/>
    <property type="match status" value="1"/>
</dbReference>
<dbReference type="FunFam" id="3.40.50.300:FF:000003">
    <property type="entry name" value="Elongation factor Tu"/>
    <property type="match status" value="1"/>
</dbReference>
<dbReference type="Gene3D" id="3.40.50.300">
    <property type="entry name" value="P-loop containing nucleotide triphosphate hydrolases"/>
    <property type="match status" value="1"/>
</dbReference>
<dbReference type="Gene3D" id="2.40.30.10">
    <property type="entry name" value="Translation factors"/>
    <property type="match status" value="2"/>
</dbReference>
<dbReference type="HAMAP" id="MF_00118_B">
    <property type="entry name" value="EF_Tu_B"/>
    <property type="match status" value="1"/>
</dbReference>
<dbReference type="InterPro" id="IPR041709">
    <property type="entry name" value="EF-Tu_GTP-bd"/>
</dbReference>
<dbReference type="InterPro" id="IPR050055">
    <property type="entry name" value="EF-Tu_GTPase"/>
</dbReference>
<dbReference type="InterPro" id="IPR004161">
    <property type="entry name" value="EFTu-like_2"/>
</dbReference>
<dbReference type="InterPro" id="IPR033720">
    <property type="entry name" value="EFTU_2"/>
</dbReference>
<dbReference type="InterPro" id="IPR031157">
    <property type="entry name" value="G_TR_CS"/>
</dbReference>
<dbReference type="InterPro" id="IPR027417">
    <property type="entry name" value="P-loop_NTPase"/>
</dbReference>
<dbReference type="InterPro" id="IPR005225">
    <property type="entry name" value="Small_GTP-bd"/>
</dbReference>
<dbReference type="InterPro" id="IPR000795">
    <property type="entry name" value="T_Tr_GTP-bd_dom"/>
</dbReference>
<dbReference type="InterPro" id="IPR009000">
    <property type="entry name" value="Transl_B-barrel_sf"/>
</dbReference>
<dbReference type="InterPro" id="IPR009001">
    <property type="entry name" value="Transl_elong_EF1A/Init_IF2_C"/>
</dbReference>
<dbReference type="InterPro" id="IPR004541">
    <property type="entry name" value="Transl_elong_EFTu/EF1A_bac/org"/>
</dbReference>
<dbReference type="InterPro" id="IPR004160">
    <property type="entry name" value="Transl_elong_EFTu/EF1A_C"/>
</dbReference>
<dbReference type="NCBIfam" id="TIGR00485">
    <property type="entry name" value="EF-Tu"/>
    <property type="match status" value="1"/>
</dbReference>
<dbReference type="NCBIfam" id="NF000766">
    <property type="entry name" value="PRK00049.1"/>
    <property type="match status" value="1"/>
</dbReference>
<dbReference type="NCBIfam" id="NF009372">
    <property type="entry name" value="PRK12735.1"/>
    <property type="match status" value="1"/>
</dbReference>
<dbReference type="NCBIfam" id="NF009373">
    <property type="entry name" value="PRK12736.1"/>
    <property type="match status" value="1"/>
</dbReference>
<dbReference type="NCBIfam" id="TIGR00231">
    <property type="entry name" value="small_GTP"/>
    <property type="match status" value="1"/>
</dbReference>
<dbReference type="PANTHER" id="PTHR43721:SF22">
    <property type="entry name" value="ELONGATION FACTOR TU, MITOCHONDRIAL"/>
    <property type="match status" value="1"/>
</dbReference>
<dbReference type="PANTHER" id="PTHR43721">
    <property type="entry name" value="ELONGATION FACTOR TU-RELATED"/>
    <property type="match status" value="1"/>
</dbReference>
<dbReference type="Pfam" id="PF00009">
    <property type="entry name" value="GTP_EFTU"/>
    <property type="match status" value="1"/>
</dbReference>
<dbReference type="Pfam" id="PF03144">
    <property type="entry name" value="GTP_EFTU_D2"/>
    <property type="match status" value="1"/>
</dbReference>
<dbReference type="Pfam" id="PF03143">
    <property type="entry name" value="GTP_EFTU_D3"/>
    <property type="match status" value="1"/>
</dbReference>
<dbReference type="PRINTS" id="PR00315">
    <property type="entry name" value="ELONGATNFCT"/>
</dbReference>
<dbReference type="SUPFAM" id="SSF50465">
    <property type="entry name" value="EF-Tu/eEF-1alpha/eIF2-gamma C-terminal domain"/>
    <property type="match status" value="1"/>
</dbReference>
<dbReference type="SUPFAM" id="SSF52540">
    <property type="entry name" value="P-loop containing nucleoside triphosphate hydrolases"/>
    <property type="match status" value="1"/>
</dbReference>
<dbReference type="SUPFAM" id="SSF50447">
    <property type="entry name" value="Translation proteins"/>
    <property type="match status" value="1"/>
</dbReference>
<dbReference type="PROSITE" id="PS00301">
    <property type="entry name" value="G_TR_1"/>
    <property type="match status" value="1"/>
</dbReference>
<dbReference type="PROSITE" id="PS51722">
    <property type="entry name" value="G_TR_2"/>
    <property type="match status" value="1"/>
</dbReference>
<protein>
    <recommendedName>
        <fullName evidence="2">Elongation factor Tu 1</fullName>
        <shortName evidence="2">EF-Tu 1</shortName>
        <ecNumber evidence="2">3.6.5.3</ecNumber>
    </recommendedName>
</protein>
<accession>Q8DD27</accession>
<accession>Q8DD28</accession>
<name>EFTU1_VIBVU</name>